<keyword id="KW-0067">ATP-binding</keyword>
<keyword id="KW-1003">Cell membrane</keyword>
<keyword id="KW-0406">Ion transport</keyword>
<keyword id="KW-0460">Magnesium</keyword>
<keyword id="KW-0472">Membrane</keyword>
<keyword id="KW-0479">Metal-binding</keyword>
<keyword id="KW-0547">Nucleotide-binding</keyword>
<keyword id="KW-0597">Phosphoprotein</keyword>
<keyword id="KW-0630">Potassium</keyword>
<keyword id="KW-0633">Potassium transport</keyword>
<keyword id="KW-1278">Translocase</keyword>
<keyword id="KW-0812">Transmembrane</keyword>
<keyword id="KW-1133">Transmembrane helix</keyword>
<keyword id="KW-0813">Transport</keyword>
<sequence>MMRPVVVKEKRVNESQIHVVEDEVRQAKTMDRDIVTHAMKQSIAKLNPKVMIKNPIMFVVEIGFIITFILSFLPSSSSSIPGWFNITVSLILLFTVLFANFAEALAEGRGKAQADSLKQSKKDVFANVVKENGDIVQVSATDLRKGDVVIVKQGEMIPSDGEVIKGLASVDESAITGESAPVIKEAGGDFCSVTGGTMVVSDEITIVITSNPGESFIDKMISLVEGAARQKTPNEIALNTVLTSLTLIFLIVVVTLPIFTNYLGFQIDTAVLVALLVCLIPTTIGGLLSAIGIAGMDRVTKFNVLAMSGKAVEAAGDINTIILDKTGTITFGNRMAHTLLPVGNETIEQVGKWAAISSVLDETPEGRSVIEYVQAKSISYNRELAEQGEFVPFKAETRMSGVDLRDGTKVRKGAVSSVIEWVQSQGGTIPKDVNQKADFISKEGGTPLVVAVNDHIYGLIYLKDTVKPGMRERFEQLRQMGIKTVMCTGDNPLTAATIAKEAGVDEFVAECKPEDKIAVIKAEQDKGKLVAMTGDGTNDAPALAQADVGLAMNSGTTAAKEAANMIDLDSNPTKIIEVVGIGKQLLMTRGALTTFSIANDVAKYFAIIPAMFTLAIPQMEALNIMKLTSPLSAILSALLFNAVIIPLLIPLAMKGIAYKPMSSNALLGRNLLIYGLGGVIVPFIGIKVIDIIVGLFI</sequence>
<feature type="chain" id="PRO_1000022434" description="Potassium-transporting ATPase ATP-binding subunit">
    <location>
        <begin position="1"/>
        <end position="697"/>
    </location>
</feature>
<feature type="transmembrane region" description="Helical" evidence="1">
    <location>
        <begin position="55"/>
        <end position="75"/>
    </location>
</feature>
<feature type="transmembrane region" description="Helical" evidence="1">
    <location>
        <begin position="79"/>
        <end position="99"/>
    </location>
</feature>
<feature type="transmembrane region" description="Helical" evidence="1">
    <location>
        <begin position="245"/>
        <end position="265"/>
    </location>
</feature>
<feature type="transmembrane region" description="Helical" evidence="1">
    <location>
        <begin position="271"/>
        <end position="291"/>
    </location>
</feature>
<feature type="transmembrane region" description="Helical" evidence="1">
    <location>
        <begin position="605"/>
        <end position="625"/>
    </location>
</feature>
<feature type="transmembrane region" description="Helical" evidence="1">
    <location>
        <begin position="633"/>
        <end position="653"/>
    </location>
</feature>
<feature type="transmembrane region" description="Helical" evidence="1">
    <location>
        <begin position="677"/>
        <end position="697"/>
    </location>
</feature>
<feature type="active site" description="4-aspartylphosphate intermediate" evidence="1">
    <location>
        <position position="324"/>
    </location>
</feature>
<feature type="binding site" evidence="1">
    <location>
        <position position="361"/>
    </location>
    <ligand>
        <name>ATP</name>
        <dbReference type="ChEBI" id="CHEBI:30616"/>
    </ligand>
</feature>
<feature type="binding site" evidence="1">
    <location>
        <position position="365"/>
    </location>
    <ligand>
        <name>ATP</name>
        <dbReference type="ChEBI" id="CHEBI:30616"/>
    </ligand>
</feature>
<feature type="binding site" evidence="1">
    <location>
        <begin position="393"/>
        <end position="400"/>
    </location>
    <ligand>
        <name>ATP</name>
        <dbReference type="ChEBI" id="CHEBI:30616"/>
    </ligand>
</feature>
<feature type="binding site" evidence="1">
    <location>
        <position position="412"/>
    </location>
    <ligand>
        <name>ATP</name>
        <dbReference type="ChEBI" id="CHEBI:30616"/>
    </ligand>
</feature>
<feature type="binding site" evidence="1">
    <location>
        <position position="535"/>
    </location>
    <ligand>
        <name>Mg(2+)</name>
        <dbReference type="ChEBI" id="CHEBI:18420"/>
    </ligand>
</feature>
<feature type="binding site" evidence="1">
    <location>
        <position position="539"/>
    </location>
    <ligand>
        <name>Mg(2+)</name>
        <dbReference type="ChEBI" id="CHEBI:18420"/>
    </ligand>
</feature>
<evidence type="ECO:0000255" key="1">
    <source>
        <dbReference type="HAMAP-Rule" id="MF_00285"/>
    </source>
</evidence>
<proteinExistence type="inferred from homology"/>
<comment type="function">
    <text evidence="1">Part of the high-affinity ATP-driven potassium transport (or Kdp) system, which catalyzes the hydrolysis of ATP coupled with the electrogenic transport of potassium into the cytoplasm. This subunit is responsible for energy coupling to the transport system and for the release of the potassium ions to the cytoplasm.</text>
</comment>
<comment type="catalytic activity">
    <reaction evidence="1">
        <text>K(+)(out) + ATP + H2O = K(+)(in) + ADP + phosphate + H(+)</text>
        <dbReference type="Rhea" id="RHEA:16777"/>
        <dbReference type="ChEBI" id="CHEBI:15377"/>
        <dbReference type="ChEBI" id="CHEBI:15378"/>
        <dbReference type="ChEBI" id="CHEBI:29103"/>
        <dbReference type="ChEBI" id="CHEBI:30616"/>
        <dbReference type="ChEBI" id="CHEBI:43474"/>
        <dbReference type="ChEBI" id="CHEBI:456216"/>
        <dbReference type="EC" id="7.2.2.6"/>
    </reaction>
    <physiologicalReaction direction="left-to-right" evidence="1">
        <dbReference type="Rhea" id="RHEA:16778"/>
    </physiologicalReaction>
</comment>
<comment type="subunit">
    <text evidence="1">The system is composed of three essential subunits: KdpA, KdpB and KdpC.</text>
</comment>
<comment type="subcellular location">
    <subcellularLocation>
        <location evidence="1">Cell membrane</location>
        <topology evidence="1">Multi-pass membrane protein</topology>
    </subcellularLocation>
</comment>
<comment type="similarity">
    <text evidence="1">Belongs to the cation transport ATPase (P-type) (TC 3.A.3) family. Type IA subfamily.</text>
</comment>
<accession>Q63FR0</accession>
<organism>
    <name type="scientific">Bacillus cereus (strain ZK / E33L)</name>
    <dbReference type="NCBI Taxonomy" id="288681"/>
    <lineage>
        <taxon>Bacteria</taxon>
        <taxon>Bacillati</taxon>
        <taxon>Bacillota</taxon>
        <taxon>Bacilli</taxon>
        <taxon>Bacillales</taxon>
        <taxon>Bacillaceae</taxon>
        <taxon>Bacillus</taxon>
        <taxon>Bacillus cereus group</taxon>
    </lineage>
</organism>
<protein>
    <recommendedName>
        <fullName evidence="1">Potassium-transporting ATPase ATP-binding subunit</fullName>
        <ecNumber evidence="1">7.2.2.6</ecNumber>
    </recommendedName>
    <alternativeName>
        <fullName evidence="1">ATP phosphohydrolase [potassium-transporting] B chain</fullName>
    </alternativeName>
    <alternativeName>
        <fullName evidence="1">Potassium-binding and translocating subunit B</fullName>
    </alternativeName>
    <alternativeName>
        <fullName evidence="1">Potassium-translocating ATPase B chain</fullName>
    </alternativeName>
</protein>
<gene>
    <name evidence="1" type="primary">kdpB</name>
    <name type="ordered locus">BCE33L0647</name>
</gene>
<dbReference type="EC" id="7.2.2.6" evidence="1"/>
<dbReference type="EMBL" id="CP000001">
    <property type="protein sequence ID" value="AAU19595.1"/>
    <property type="molecule type" value="Genomic_DNA"/>
</dbReference>
<dbReference type="SMR" id="Q63FR0"/>
<dbReference type="KEGG" id="bcz:BCE33L0647"/>
<dbReference type="Proteomes" id="UP000002612">
    <property type="component" value="Chromosome"/>
</dbReference>
<dbReference type="GO" id="GO:0005886">
    <property type="term" value="C:plasma membrane"/>
    <property type="evidence" value="ECO:0007669"/>
    <property type="project" value="UniProtKB-SubCell"/>
</dbReference>
<dbReference type="GO" id="GO:0005524">
    <property type="term" value="F:ATP binding"/>
    <property type="evidence" value="ECO:0007669"/>
    <property type="project" value="UniProtKB-UniRule"/>
</dbReference>
<dbReference type="GO" id="GO:0016887">
    <property type="term" value="F:ATP hydrolysis activity"/>
    <property type="evidence" value="ECO:0007669"/>
    <property type="project" value="InterPro"/>
</dbReference>
<dbReference type="GO" id="GO:0000287">
    <property type="term" value="F:magnesium ion binding"/>
    <property type="evidence" value="ECO:0007669"/>
    <property type="project" value="UniProtKB-UniRule"/>
</dbReference>
<dbReference type="GO" id="GO:0008556">
    <property type="term" value="F:P-type potassium transmembrane transporter activity"/>
    <property type="evidence" value="ECO:0007669"/>
    <property type="project" value="UniProtKB-UniRule"/>
</dbReference>
<dbReference type="CDD" id="cd02078">
    <property type="entry name" value="P-type_ATPase_K"/>
    <property type="match status" value="1"/>
</dbReference>
<dbReference type="FunFam" id="2.70.150.10:FF:000010">
    <property type="entry name" value="Potassium-transporting ATPase ATP-binding subunit"/>
    <property type="match status" value="1"/>
</dbReference>
<dbReference type="FunFam" id="3.40.1110.10:FF:000007">
    <property type="entry name" value="Potassium-transporting ATPase ATP-binding subunit"/>
    <property type="match status" value="1"/>
</dbReference>
<dbReference type="Gene3D" id="3.40.1110.10">
    <property type="entry name" value="Calcium-transporting ATPase, cytoplasmic domain N"/>
    <property type="match status" value="1"/>
</dbReference>
<dbReference type="Gene3D" id="2.70.150.10">
    <property type="entry name" value="Calcium-transporting ATPase, cytoplasmic transduction domain A"/>
    <property type="match status" value="1"/>
</dbReference>
<dbReference type="Gene3D" id="3.40.50.1000">
    <property type="entry name" value="HAD superfamily/HAD-like"/>
    <property type="match status" value="1"/>
</dbReference>
<dbReference type="HAMAP" id="MF_00285">
    <property type="entry name" value="KdpB"/>
    <property type="match status" value="1"/>
</dbReference>
<dbReference type="InterPro" id="IPR023299">
    <property type="entry name" value="ATPase_P-typ_cyto_dom_N"/>
</dbReference>
<dbReference type="InterPro" id="IPR018303">
    <property type="entry name" value="ATPase_P-typ_P_site"/>
</dbReference>
<dbReference type="InterPro" id="IPR023298">
    <property type="entry name" value="ATPase_P-typ_TM_dom_sf"/>
</dbReference>
<dbReference type="InterPro" id="IPR008250">
    <property type="entry name" value="ATPase_P-typ_transduc_dom_A_sf"/>
</dbReference>
<dbReference type="InterPro" id="IPR036412">
    <property type="entry name" value="HAD-like_sf"/>
</dbReference>
<dbReference type="InterPro" id="IPR023214">
    <property type="entry name" value="HAD_sf"/>
</dbReference>
<dbReference type="InterPro" id="IPR006391">
    <property type="entry name" value="P-type_ATPase_bsu_IA"/>
</dbReference>
<dbReference type="InterPro" id="IPR001757">
    <property type="entry name" value="P_typ_ATPase"/>
</dbReference>
<dbReference type="InterPro" id="IPR044492">
    <property type="entry name" value="P_typ_ATPase_HD_dom"/>
</dbReference>
<dbReference type="NCBIfam" id="TIGR01494">
    <property type="entry name" value="ATPase_P-type"/>
    <property type="match status" value="2"/>
</dbReference>
<dbReference type="NCBIfam" id="TIGR01497">
    <property type="entry name" value="kdpB"/>
    <property type="match status" value="1"/>
</dbReference>
<dbReference type="PANTHER" id="PTHR43743">
    <property type="entry name" value="POTASSIUM-TRANSPORTING ATPASE ATP-BINDING SUBUNIT"/>
    <property type="match status" value="1"/>
</dbReference>
<dbReference type="PANTHER" id="PTHR43743:SF1">
    <property type="entry name" value="POTASSIUM-TRANSPORTING ATPASE ATP-BINDING SUBUNIT"/>
    <property type="match status" value="1"/>
</dbReference>
<dbReference type="Pfam" id="PF00122">
    <property type="entry name" value="E1-E2_ATPase"/>
    <property type="match status" value="1"/>
</dbReference>
<dbReference type="Pfam" id="PF00702">
    <property type="entry name" value="Hydrolase"/>
    <property type="match status" value="1"/>
</dbReference>
<dbReference type="PRINTS" id="PR00119">
    <property type="entry name" value="CATATPASE"/>
</dbReference>
<dbReference type="SFLD" id="SFLDG00002">
    <property type="entry name" value="C1.7:_P-type_atpase_like"/>
    <property type="match status" value="1"/>
</dbReference>
<dbReference type="SFLD" id="SFLDF00027">
    <property type="entry name" value="p-type_atpase"/>
    <property type="match status" value="1"/>
</dbReference>
<dbReference type="SUPFAM" id="SSF81653">
    <property type="entry name" value="Calcium ATPase, transduction domain A"/>
    <property type="match status" value="1"/>
</dbReference>
<dbReference type="SUPFAM" id="SSF81665">
    <property type="entry name" value="Calcium ATPase, transmembrane domain M"/>
    <property type="match status" value="1"/>
</dbReference>
<dbReference type="SUPFAM" id="SSF56784">
    <property type="entry name" value="HAD-like"/>
    <property type="match status" value="1"/>
</dbReference>
<dbReference type="PROSITE" id="PS00154">
    <property type="entry name" value="ATPASE_E1_E2"/>
    <property type="match status" value="1"/>
</dbReference>
<reference key="1">
    <citation type="journal article" date="2006" name="J. Bacteriol.">
        <title>Pathogenomic sequence analysis of Bacillus cereus and Bacillus thuringiensis isolates closely related to Bacillus anthracis.</title>
        <authorList>
            <person name="Han C.S."/>
            <person name="Xie G."/>
            <person name="Challacombe J.F."/>
            <person name="Altherr M.R."/>
            <person name="Bhotika S.S."/>
            <person name="Bruce D."/>
            <person name="Campbell C.S."/>
            <person name="Campbell M.L."/>
            <person name="Chen J."/>
            <person name="Chertkov O."/>
            <person name="Cleland C."/>
            <person name="Dimitrijevic M."/>
            <person name="Doggett N.A."/>
            <person name="Fawcett J.J."/>
            <person name="Glavina T."/>
            <person name="Goodwin L.A."/>
            <person name="Hill K.K."/>
            <person name="Hitchcock P."/>
            <person name="Jackson P.J."/>
            <person name="Keim P."/>
            <person name="Kewalramani A.R."/>
            <person name="Longmire J."/>
            <person name="Lucas S."/>
            <person name="Malfatti S."/>
            <person name="McMurry K."/>
            <person name="Meincke L.J."/>
            <person name="Misra M."/>
            <person name="Moseman B.L."/>
            <person name="Mundt M."/>
            <person name="Munk A.C."/>
            <person name="Okinaka R.T."/>
            <person name="Parson-Quintana B."/>
            <person name="Reilly L.P."/>
            <person name="Richardson P."/>
            <person name="Robinson D.L."/>
            <person name="Rubin E."/>
            <person name="Saunders E."/>
            <person name="Tapia R."/>
            <person name="Tesmer J.G."/>
            <person name="Thayer N."/>
            <person name="Thompson L.S."/>
            <person name="Tice H."/>
            <person name="Ticknor L.O."/>
            <person name="Wills P.L."/>
            <person name="Brettin T.S."/>
            <person name="Gilna P."/>
        </authorList>
    </citation>
    <scope>NUCLEOTIDE SEQUENCE [LARGE SCALE GENOMIC DNA]</scope>
    <source>
        <strain>ZK / E33L</strain>
    </source>
</reference>
<name>KDPB_BACCZ</name>